<keyword id="KW-0238">DNA-binding</keyword>
<keyword id="KW-0539">Nucleus</keyword>
<keyword id="KW-1185">Reference proteome</keyword>
<keyword id="KW-0804">Transcription</keyword>
<keyword id="KW-0805">Transcription regulation</keyword>
<organism>
    <name type="scientific">Arabidopsis thaliana</name>
    <name type="common">Mouse-ear cress</name>
    <dbReference type="NCBI Taxonomy" id="3702"/>
    <lineage>
        <taxon>Eukaryota</taxon>
        <taxon>Viridiplantae</taxon>
        <taxon>Streptophyta</taxon>
        <taxon>Embryophyta</taxon>
        <taxon>Tracheophyta</taxon>
        <taxon>Spermatophyta</taxon>
        <taxon>Magnoliopsida</taxon>
        <taxon>eudicotyledons</taxon>
        <taxon>Gunneridae</taxon>
        <taxon>Pentapetalae</taxon>
        <taxon>rosids</taxon>
        <taxon>malvids</taxon>
        <taxon>Brassicales</taxon>
        <taxon>Brassicaceae</taxon>
        <taxon>Camelineae</taxon>
        <taxon>Arabidopsis</taxon>
    </lineage>
</organism>
<gene>
    <name evidence="7" type="primary">HRS1</name>
    <name evidence="8" type="synonym">NIGT1</name>
    <name evidence="10" type="ordered locus">At1g13300</name>
    <name evidence="11" type="ORF">T6J4.6</name>
</gene>
<dbReference type="EMBL" id="AC011810">
    <property type="protein sequence ID" value="AAG09552.1"/>
    <property type="molecule type" value="Genomic_DNA"/>
</dbReference>
<dbReference type="EMBL" id="CP002684">
    <property type="protein sequence ID" value="AEE28996.1"/>
    <property type="molecule type" value="Genomic_DNA"/>
</dbReference>
<dbReference type="EMBL" id="AF367336">
    <property type="protein sequence ID" value="AAK32923.1"/>
    <property type="molecule type" value="mRNA"/>
</dbReference>
<dbReference type="EMBL" id="AY124865">
    <property type="protein sequence ID" value="AAM70574.1"/>
    <property type="molecule type" value="mRNA"/>
</dbReference>
<dbReference type="PIR" id="F86267">
    <property type="entry name" value="F86267"/>
</dbReference>
<dbReference type="RefSeq" id="NP_563926.1">
    <property type="nucleotide sequence ID" value="NM_101201.2"/>
</dbReference>
<dbReference type="SMR" id="Q9FX67"/>
<dbReference type="IntAct" id="Q9FX67">
    <property type="interactions" value="1"/>
</dbReference>
<dbReference type="STRING" id="3702.Q9FX67"/>
<dbReference type="PaxDb" id="3702-AT1G13300.1"/>
<dbReference type="ProteomicsDB" id="230142"/>
<dbReference type="EnsemblPlants" id="AT1G13300.1">
    <property type="protein sequence ID" value="AT1G13300.1"/>
    <property type="gene ID" value="AT1G13300"/>
</dbReference>
<dbReference type="GeneID" id="837890"/>
<dbReference type="Gramene" id="AT1G13300.1">
    <property type="protein sequence ID" value="AT1G13300.1"/>
    <property type="gene ID" value="AT1G13300"/>
</dbReference>
<dbReference type="KEGG" id="ath:AT1G13300"/>
<dbReference type="Araport" id="AT1G13300"/>
<dbReference type="TAIR" id="AT1G13300">
    <property type="gene designation" value="HRS1"/>
</dbReference>
<dbReference type="eggNOG" id="ENOG502QSXV">
    <property type="taxonomic scope" value="Eukaryota"/>
</dbReference>
<dbReference type="HOGENOM" id="CLU_036551_0_0_1"/>
<dbReference type="InParanoid" id="Q9FX67"/>
<dbReference type="OMA" id="GQTQRKQ"/>
<dbReference type="PhylomeDB" id="Q9FX67"/>
<dbReference type="PRO" id="PR:Q9FX67"/>
<dbReference type="Proteomes" id="UP000006548">
    <property type="component" value="Chromosome 1"/>
</dbReference>
<dbReference type="ExpressionAtlas" id="Q9FX67">
    <property type="expression patterns" value="baseline and differential"/>
</dbReference>
<dbReference type="GO" id="GO:0005634">
    <property type="term" value="C:nucleus"/>
    <property type="evidence" value="ECO:0007669"/>
    <property type="project" value="UniProtKB-SubCell"/>
</dbReference>
<dbReference type="GO" id="GO:0003677">
    <property type="term" value="F:DNA binding"/>
    <property type="evidence" value="ECO:0007669"/>
    <property type="project" value="UniProtKB-KW"/>
</dbReference>
<dbReference type="GO" id="GO:0003700">
    <property type="term" value="F:DNA-binding transcription factor activity"/>
    <property type="evidence" value="ECO:0000314"/>
    <property type="project" value="TAIR"/>
</dbReference>
<dbReference type="GO" id="GO:0001217">
    <property type="term" value="F:DNA-binding transcription repressor activity"/>
    <property type="evidence" value="ECO:0000314"/>
    <property type="project" value="TAIR"/>
</dbReference>
<dbReference type="GO" id="GO:0071456">
    <property type="term" value="P:cellular response to hypoxia"/>
    <property type="evidence" value="ECO:0007007"/>
    <property type="project" value="TAIR"/>
</dbReference>
<dbReference type="GO" id="GO:1901699">
    <property type="term" value="P:cellular response to nitrogen compound"/>
    <property type="evidence" value="ECO:0000270"/>
    <property type="project" value="TAIR"/>
</dbReference>
<dbReference type="GO" id="GO:0016036">
    <property type="term" value="P:cellular response to phosphate starvation"/>
    <property type="evidence" value="ECO:0000315"/>
    <property type="project" value="TAIR"/>
</dbReference>
<dbReference type="GO" id="GO:0009788">
    <property type="term" value="P:negative regulation of abscisic acid-activated signaling pathway"/>
    <property type="evidence" value="ECO:0000315"/>
    <property type="project" value="CACAO"/>
</dbReference>
<dbReference type="GO" id="GO:0080022">
    <property type="term" value="P:primary root development"/>
    <property type="evidence" value="ECO:0000315"/>
    <property type="project" value="TAIR"/>
</dbReference>
<dbReference type="GO" id="GO:0006355">
    <property type="term" value="P:regulation of DNA-templated transcription"/>
    <property type="evidence" value="ECO:0000304"/>
    <property type="project" value="TAIR"/>
</dbReference>
<dbReference type="GO" id="GO:0032107">
    <property type="term" value="P:regulation of response to nutrient levels"/>
    <property type="evidence" value="ECO:0000316"/>
    <property type="project" value="TAIR"/>
</dbReference>
<dbReference type="FunFam" id="1.10.10.60:FF:000002">
    <property type="entry name" value="Myb family transcription factor"/>
    <property type="match status" value="1"/>
</dbReference>
<dbReference type="Gene3D" id="1.10.10.60">
    <property type="entry name" value="Homeodomain-like"/>
    <property type="match status" value="1"/>
</dbReference>
<dbReference type="InterPro" id="IPR009057">
    <property type="entry name" value="Homeodomain-like_sf"/>
</dbReference>
<dbReference type="InterPro" id="IPR044787">
    <property type="entry name" value="HRS1-like"/>
</dbReference>
<dbReference type="InterPro" id="IPR017930">
    <property type="entry name" value="Myb_dom"/>
</dbReference>
<dbReference type="InterPro" id="IPR006447">
    <property type="entry name" value="Myb_dom_plants"/>
</dbReference>
<dbReference type="InterPro" id="IPR001005">
    <property type="entry name" value="SANT/Myb"/>
</dbReference>
<dbReference type="NCBIfam" id="TIGR01557">
    <property type="entry name" value="myb_SHAQKYF"/>
    <property type="match status" value="1"/>
</dbReference>
<dbReference type="PANTHER" id="PTHR31003">
    <property type="entry name" value="MYB FAMILY TRANSCRIPTION FACTOR"/>
    <property type="match status" value="1"/>
</dbReference>
<dbReference type="PANTHER" id="PTHR31003:SF40">
    <property type="entry name" value="TRANSCRIPTION FACTOR HRS1"/>
    <property type="match status" value="1"/>
</dbReference>
<dbReference type="Pfam" id="PF00249">
    <property type="entry name" value="Myb_DNA-binding"/>
    <property type="match status" value="1"/>
</dbReference>
<dbReference type="SUPFAM" id="SSF46689">
    <property type="entry name" value="Homeodomain-like"/>
    <property type="match status" value="1"/>
</dbReference>
<dbReference type="PROSITE" id="PS51294">
    <property type="entry name" value="HTH_MYB"/>
    <property type="match status" value="1"/>
</dbReference>
<accession>Q9FX67</accession>
<comment type="function">
    <text evidence="3 4 5">Transcription factor involved in nitrate and phosphate signaling in roots. Integrates nitrate and phosphate starvation responses and adaptation of root architecture depending on nutrient availabilities. Acts downstream of the nitrate sensor and transporter NPF6.3/NRT1.1. Represses primary root development in response to phosphate deficiency conditions, only when nitrate is present (PubMed:25723764). Involved in the modulation of primary root and root hair growth in phosphate-deprived environment (PubMed:19341407). May be required for suppressing abscisic acid (ABA) signaling in germinating embryo axis, which promotes the timely germination of seeds (PubMed:22545134).</text>
</comment>
<comment type="subcellular location">
    <subcellularLocation>
        <location evidence="1 5">Nucleus</location>
    </subcellularLocation>
</comment>
<comment type="tissue specificity">
    <text evidence="3">Expressed in the root hair region and root hair cells.</text>
</comment>
<comment type="induction">
    <text evidence="5 6">Induced by nitrate (PubMed:25723764). Down-regulated under nitrate deprivation conditions (PubMed:27419465).</text>
</comment>
<comment type="disruption phenotype">
    <text evidence="3">No visible phenotype under normal growth conditions.</text>
</comment>
<comment type="miscellaneous">
    <text evidence="3">Plants over-expressing display increased susceptibility in primary root shortening under low phosphate conditions.</text>
</comment>
<proteinExistence type="evidence at transcript level"/>
<evidence type="ECO:0000255" key="1">
    <source>
        <dbReference type="PROSITE-ProRule" id="PRU00625"/>
    </source>
</evidence>
<evidence type="ECO:0000256" key="2">
    <source>
        <dbReference type="SAM" id="MobiDB-lite"/>
    </source>
</evidence>
<evidence type="ECO:0000269" key="3">
    <source>
    </source>
</evidence>
<evidence type="ECO:0000269" key="4">
    <source>
    </source>
</evidence>
<evidence type="ECO:0000269" key="5">
    <source>
    </source>
</evidence>
<evidence type="ECO:0000269" key="6">
    <source>
    </source>
</evidence>
<evidence type="ECO:0000303" key="7">
    <source>
    </source>
</evidence>
<evidence type="ECO:0000303" key="8">
    <source>
    </source>
</evidence>
<evidence type="ECO:0000305" key="9"/>
<evidence type="ECO:0000312" key="10">
    <source>
        <dbReference type="Araport" id="AT1G13300"/>
    </source>
</evidence>
<evidence type="ECO:0000312" key="11">
    <source>
        <dbReference type="EMBL" id="AAG09552.1"/>
    </source>
</evidence>
<protein>
    <recommendedName>
        <fullName evidence="9">Transcription factor HRS1</fullName>
    </recommendedName>
    <alternativeName>
        <fullName evidence="9">MYB-domain transcription factor HRS1</fullName>
    </alternativeName>
    <alternativeName>
        <fullName evidence="8">NIGT1 protein homolog</fullName>
        <shortName evidence="8">AtNIGT1</shortName>
    </alternativeName>
    <alternativeName>
        <fullName evidence="7">Protein HYPERSENSITIVITY TO LOW PI-ELICITED PRIMARY ROOT SHORTENING 1</fullName>
    </alternativeName>
</protein>
<reference key="1">
    <citation type="journal article" date="2000" name="Nature">
        <title>Sequence and analysis of chromosome 1 of the plant Arabidopsis thaliana.</title>
        <authorList>
            <person name="Theologis A."/>
            <person name="Ecker J.R."/>
            <person name="Palm C.J."/>
            <person name="Federspiel N.A."/>
            <person name="Kaul S."/>
            <person name="White O."/>
            <person name="Alonso J."/>
            <person name="Altafi H."/>
            <person name="Araujo R."/>
            <person name="Bowman C.L."/>
            <person name="Brooks S.Y."/>
            <person name="Buehler E."/>
            <person name="Chan A."/>
            <person name="Chao Q."/>
            <person name="Chen H."/>
            <person name="Cheuk R.F."/>
            <person name="Chin C.W."/>
            <person name="Chung M.K."/>
            <person name="Conn L."/>
            <person name="Conway A.B."/>
            <person name="Conway A.R."/>
            <person name="Creasy T.H."/>
            <person name="Dewar K."/>
            <person name="Dunn P."/>
            <person name="Etgu P."/>
            <person name="Feldblyum T.V."/>
            <person name="Feng J.-D."/>
            <person name="Fong B."/>
            <person name="Fujii C.Y."/>
            <person name="Gill J.E."/>
            <person name="Goldsmith A.D."/>
            <person name="Haas B."/>
            <person name="Hansen N.F."/>
            <person name="Hughes B."/>
            <person name="Huizar L."/>
            <person name="Hunter J.L."/>
            <person name="Jenkins J."/>
            <person name="Johnson-Hopson C."/>
            <person name="Khan S."/>
            <person name="Khaykin E."/>
            <person name="Kim C.J."/>
            <person name="Koo H.L."/>
            <person name="Kremenetskaia I."/>
            <person name="Kurtz D.B."/>
            <person name="Kwan A."/>
            <person name="Lam B."/>
            <person name="Langin-Hooper S."/>
            <person name="Lee A."/>
            <person name="Lee J.M."/>
            <person name="Lenz C.A."/>
            <person name="Li J.H."/>
            <person name="Li Y.-P."/>
            <person name="Lin X."/>
            <person name="Liu S.X."/>
            <person name="Liu Z.A."/>
            <person name="Luros J.S."/>
            <person name="Maiti R."/>
            <person name="Marziali A."/>
            <person name="Militscher J."/>
            <person name="Miranda M."/>
            <person name="Nguyen M."/>
            <person name="Nierman W.C."/>
            <person name="Osborne B.I."/>
            <person name="Pai G."/>
            <person name="Peterson J."/>
            <person name="Pham P.K."/>
            <person name="Rizzo M."/>
            <person name="Rooney T."/>
            <person name="Rowley D."/>
            <person name="Sakano H."/>
            <person name="Salzberg S.L."/>
            <person name="Schwartz J.R."/>
            <person name="Shinn P."/>
            <person name="Southwick A.M."/>
            <person name="Sun H."/>
            <person name="Tallon L.J."/>
            <person name="Tambunga G."/>
            <person name="Toriumi M.J."/>
            <person name="Town C.D."/>
            <person name="Utterback T."/>
            <person name="Van Aken S."/>
            <person name="Vaysberg M."/>
            <person name="Vysotskaia V.S."/>
            <person name="Walker M."/>
            <person name="Wu D."/>
            <person name="Yu G."/>
            <person name="Fraser C.M."/>
            <person name="Venter J.C."/>
            <person name="Davis R.W."/>
        </authorList>
    </citation>
    <scope>NUCLEOTIDE SEQUENCE [LARGE SCALE GENOMIC DNA]</scope>
    <source>
        <strain>cv. Columbia</strain>
    </source>
</reference>
<reference key="2">
    <citation type="journal article" date="2017" name="Plant J.">
        <title>Araport11: a complete reannotation of the Arabidopsis thaliana reference genome.</title>
        <authorList>
            <person name="Cheng C.Y."/>
            <person name="Krishnakumar V."/>
            <person name="Chan A.P."/>
            <person name="Thibaud-Nissen F."/>
            <person name="Schobel S."/>
            <person name="Town C.D."/>
        </authorList>
    </citation>
    <scope>GENOME REANNOTATION</scope>
    <source>
        <strain>cv. Columbia</strain>
    </source>
</reference>
<reference key="3">
    <citation type="journal article" date="2003" name="Science">
        <title>Empirical analysis of transcriptional activity in the Arabidopsis genome.</title>
        <authorList>
            <person name="Yamada K."/>
            <person name="Lim J."/>
            <person name="Dale J.M."/>
            <person name="Chen H."/>
            <person name="Shinn P."/>
            <person name="Palm C.J."/>
            <person name="Southwick A.M."/>
            <person name="Wu H.C."/>
            <person name="Kim C.J."/>
            <person name="Nguyen M."/>
            <person name="Pham P.K."/>
            <person name="Cheuk R.F."/>
            <person name="Karlin-Newmann G."/>
            <person name="Liu S.X."/>
            <person name="Lam B."/>
            <person name="Sakano H."/>
            <person name="Wu T."/>
            <person name="Yu G."/>
            <person name="Miranda M."/>
            <person name="Quach H.L."/>
            <person name="Tripp M."/>
            <person name="Chang C.H."/>
            <person name="Lee J.M."/>
            <person name="Toriumi M.J."/>
            <person name="Chan M.M."/>
            <person name="Tang C.C."/>
            <person name="Onodera C.S."/>
            <person name="Deng J.M."/>
            <person name="Akiyama K."/>
            <person name="Ansari Y."/>
            <person name="Arakawa T."/>
            <person name="Banh J."/>
            <person name="Banno F."/>
            <person name="Bowser L."/>
            <person name="Brooks S.Y."/>
            <person name="Carninci P."/>
            <person name="Chao Q."/>
            <person name="Choy N."/>
            <person name="Enju A."/>
            <person name="Goldsmith A.D."/>
            <person name="Gurjal M."/>
            <person name="Hansen N.F."/>
            <person name="Hayashizaki Y."/>
            <person name="Johnson-Hopson C."/>
            <person name="Hsuan V.W."/>
            <person name="Iida K."/>
            <person name="Karnes M."/>
            <person name="Khan S."/>
            <person name="Koesema E."/>
            <person name="Ishida J."/>
            <person name="Jiang P.X."/>
            <person name="Jones T."/>
            <person name="Kawai J."/>
            <person name="Kamiya A."/>
            <person name="Meyers C."/>
            <person name="Nakajima M."/>
            <person name="Narusaka M."/>
            <person name="Seki M."/>
            <person name="Sakurai T."/>
            <person name="Satou M."/>
            <person name="Tamse R."/>
            <person name="Vaysberg M."/>
            <person name="Wallender E.K."/>
            <person name="Wong C."/>
            <person name="Yamamura Y."/>
            <person name="Yuan S."/>
            <person name="Shinozaki K."/>
            <person name="Davis R.W."/>
            <person name="Theologis A."/>
            <person name="Ecker J.R."/>
        </authorList>
    </citation>
    <scope>NUCLEOTIDE SEQUENCE [LARGE SCALE MRNA]</scope>
    <source>
        <strain>cv. Columbia</strain>
    </source>
</reference>
<reference key="4">
    <citation type="journal article" date="2009" name="J. Integr. Plant Biol.">
        <title>Overexpressing HRS1 confers hypersensitivity to low phosphate-elicited inhibition of primary root growth in Arabidopsis thaliana.</title>
        <authorList>
            <person name="Liu H."/>
            <person name="Yang H."/>
            <person name="Wu C."/>
            <person name="Feng J."/>
            <person name="Liu X."/>
            <person name="Qin H."/>
            <person name="Wang D."/>
        </authorList>
    </citation>
    <scope>FUNCTION</scope>
    <scope>TISSUE SPECIFICITY</scope>
    <scope>INDUCTION BY PHOSPHATE DEPRIVATION</scope>
    <scope>DISRUPTION PHENOTYPE</scope>
</reference>
<reference key="5">
    <citation type="journal article" date="2012" name="PLoS ONE">
        <title>HRS1 acts as a negative regulator of abscisic acid signaling to promote timely germination of Arabidopsis seeds.</title>
        <authorList>
            <person name="Wu C."/>
            <person name="Feng J."/>
            <person name="Wang R."/>
            <person name="Liu H."/>
            <person name="Yang H."/>
            <person name="Rodriguez P.L."/>
            <person name="Qin H."/>
            <person name="Liu X."/>
            <person name="Wang D."/>
        </authorList>
    </citation>
    <scope>FUNCTION</scope>
</reference>
<reference key="6">
    <citation type="journal article" date="2015" name="Nat. Commun.">
        <title>AtNIGT1/HRS1 integrates nitrate and phosphate signals at the Arabidopsis root tip.</title>
        <authorList>
            <person name="Medici A."/>
            <person name="Marshall-Colon A."/>
            <person name="Ronzier E."/>
            <person name="Szponarski W."/>
            <person name="Wang R."/>
            <person name="Gojon A."/>
            <person name="Crawford N.M."/>
            <person name="Ruffel S."/>
            <person name="Coruzzi G.M."/>
            <person name="Krouk G."/>
        </authorList>
    </citation>
    <scope>FUNCTION</scope>
    <scope>SUBCELLULAR LOCATION</scope>
    <scope>INDUCTION BY NITRATE</scope>
</reference>
<reference key="7">
    <citation type="journal article" date="2016" name="Plant J.">
        <title>Early nitrogen-deprivation responses in Arabidopsis roots reveal distinct differences on transcriptome and (phospho-) proteome levels between nitrate and ammonium nutrition.</title>
        <authorList>
            <person name="Menz J."/>
            <person name="Li Z."/>
            <person name="Schulze W.X."/>
            <person name="Ludewig U."/>
        </authorList>
    </citation>
    <scope>INDUCTION</scope>
</reference>
<name>HRS1_ARATH</name>
<sequence>MIKKFSNMDYNQKRERCGQYIEALEEERRKIHVFQRELPLCLDLVTQAIEACKRELPEMTTENMYGQPECSEQTTGECGPVLEQFLTIKDSSTSNEEEDEEFDDEHGNHDPDNDSEDKNTKSDWLKSVQLWNQPDHPLLPKEERLQQETMTRDESMRKDPMVNGGEGRKREAEKDGGGGRKQRRCWSSQLHRRFLNALQHLGGPHVATPKQIREFMKVDGLTNDEVKSHLQKYRLHTRRPRQTVPNNGNSQTQHFVVVGGLWVPQSDYSTGKTTGGATTSSTTTTTGIYGTMAAPPPPQWPSHSNYRPSIIVDEGSGSHSEGVVVRCSSPAMSSSTRNHYVKNN</sequence>
<feature type="chain" id="PRO_0000439543" description="Transcription factor HRS1">
    <location>
        <begin position="1"/>
        <end position="344"/>
    </location>
</feature>
<feature type="domain" description="HTH myb-type" evidence="1">
    <location>
        <begin position="178"/>
        <end position="238"/>
    </location>
</feature>
<feature type="DNA-binding region" description="H-T-H motif" evidence="1">
    <location>
        <begin position="209"/>
        <end position="234"/>
    </location>
</feature>
<feature type="region of interest" description="Disordered" evidence="2">
    <location>
        <begin position="88"/>
        <end position="184"/>
    </location>
</feature>
<feature type="region of interest" description="Disordered" evidence="2">
    <location>
        <begin position="269"/>
        <end position="322"/>
    </location>
</feature>
<feature type="compositionally biased region" description="Acidic residues" evidence="2">
    <location>
        <begin position="95"/>
        <end position="104"/>
    </location>
</feature>
<feature type="compositionally biased region" description="Basic and acidic residues" evidence="2">
    <location>
        <begin position="105"/>
        <end position="124"/>
    </location>
</feature>
<feature type="compositionally biased region" description="Basic and acidic residues" evidence="2">
    <location>
        <begin position="138"/>
        <end position="178"/>
    </location>
</feature>
<feature type="compositionally biased region" description="Low complexity" evidence="2">
    <location>
        <begin position="269"/>
        <end position="291"/>
    </location>
</feature>